<proteinExistence type="inferred from homology"/>
<evidence type="ECO:0000255" key="1">
    <source>
        <dbReference type="HAMAP-Rule" id="MF_00031"/>
    </source>
</evidence>
<sequence>MIGRISGLLLEKFPPLVLVDVQGVGYEIDVPMSTFYNLPAVGTQITLHTHFVVREDAHLLFGFATEGERQAFRQLVKISGVGARTALALLSGLSVADLHQTVSNQDPARLIRIPGIGKKTAERLLLELRDKLDLGVSAIPGAAGARRPSTMGSDVLNALLSLGYNDREANWAVSQLSVDLSVSDGIRQALKFLSKEK</sequence>
<protein>
    <recommendedName>
        <fullName evidence="1">Holliday junction branch migration complex subunit RuvA</fullName>
    </recommendedName>
</protein>
<accession>Q2Y5G4</accession>
<gene>
    <name evidence="1" type="primary">ruvA</name>
    <name type="ordered locus">Nmul_A2720</name>
</gene>
<reference key="1">
    <citation type="submission" date="2005-08" db="EMBL/GenBank/DDBJ databases">
        <title>Complete sequence of chromosome 1 of Nitrosospira multiformis ATCC 25196.</title>
        <authorList>
            <person name="Copeland A."/>
            <person name="Lucas S."/>
            <person name="Lapidus A."/>
            <person name="Barry K."/>
            <person name="Detter J.C."/>
            <person name="Glavina T."/>
            <person name="Hammon N."/>
            <person name="Israni S."/>
            <person name="Pitluck S."/>
            <person name="Chain P."/>
            <person name="Malfatti S."/>
            <person name="Shin M."/>
            <person name="Vergez L."/>
            <person name="Schmutz J."/>
            <person name="Larimer F."/>
            <person name="Land M."/>
            <person name="Hauser L."/>
            <person name="Kyrpides N."/>
            <person name="Lykidis A."/>
            <person name="Richardson P."/>
        </authorList>
    </citation>
    <scope>NUCLEOTIDE SEQUENCE [LARGE SCALE GENOMIC DNA]</scope>
    <source>
        <strain>ATCC 25196 / NCIMB 11849 / C 71</strain>
    </source>
</reference>
<keyword id="KW-0963">Cytoplasm</keyword>
<keyword id="KW-0227">DNA damage</keyword>
<keyword id="KW-0233">DNA recombination</keyword>
<keyword id="KW-0234">DNA repair</keyword>
<keyword id="KW-0238">DNA-binding</keyword>
<keyword id="KW-1185">Reference proteome</keyword>
<dbReference type="EMBL" id="CP000103">
    <property type="protein sequence ID" value="ABB76007.1"/>
    <property type="molecule type" value="Genomic_DNA"/>
</dbReference>
<dbReference type="RefSeq" id="WP_011381999.1">
    <property type="nucleotide sequence ID" value="NC_007614.1"/>
</dbReference>
<dbReference type="SMR" id="Q2Y5G4"/>
<dbReference type="STRING" id="323848.Nmul_A2720"/>
<dbReference type="KEGG" id="nmu:Nmul_A2720"/>
<dbReference type="eggNOG" id="COG0632">
    <property type="taxonomic scope" value="Bacteria"/>
</dbReference>
<dbReference type="HOGENOM" id="CLU_087936_0_0_4"/>
<dbReference type="OrthoDB" id="5293449at2"/>
<dbReference type="Proteomes" id="UP000002718">
    <property type="component" value="Chromosome"/>
</dbReference>
<dbReference type="GO" id="GO:0005737">
    <property type="term" value="C:cytoplasm"/>
    <property type="evidence" value="ECO:0007669"/>
    <property type="project" value="UniProtKB-SubCell"/>
</dbReference>
<dbReference type="GO" id="GO:0009379">
    <property type="term" value="C:Holliday junction helicase complex"/>
    <property type="evidence" value="ECO:0007669"/>
    <property type="project" value="InterPro"/>
</dbReference>
<dbReference type="GO" id="GO:0048476">
    <property type="term" value="C:Holliday junction resolvase complex"/>
    <property type="evidence" value="ECO:0007669"/>
    <property type="project" value="UniProtKB-UniRule"/>
</dbReference>
<dbReference type="GO" id="GO:0005524">
    <property type="term" value="F:ATP binding"/>
    <property type="evidence" value="ECO:0007669"/>
    <property type="project" value="InterPro"/>
</dbReference>
<dbReference type="GO" id="GO:0000400">
    <property type="term" value="F:four-way junction DNA binding"/>
    <property type="evidence" value="ECO:0007669"/>
    <property type="project" value="UniProtKB-UniRule"/>
</dbReference>
<dbReference type="GO" id="GO:0009378">
    <property type="term" value="F:four-way junction helicase activity"/>
    <property type="evidence" value="ECO:0007669"/>
    <property type="project" value="InterPro"/>
</dbReference>
<dbReference type="GO" id="GO:0006310">
    <property type="term" value="P:DNA recombination"/>
    <property type="evidence" value="ECO:0007669"/>
    <property type="project" value="UniProtKB-UniRule"/>
</dbReference>
<dbReference type="GO" id="GO:0006281">
    <property type="term" value="P:DNA repair"/>
    <property type="evidence" value="ECO:0007669"/>
    <property type="project" value="UniProtKB-UniRule"/>
</dbReference>
<dbReference type="CDD" id="cd14332">
    <property type="entry name" value="UBA_RuvA_C"/>
    <property type="match status" value="1"/>
</dbReference>
<dbReference type="Gene3D" id="1.10.150.20">
    <property type="entry name" value="5' to 3' exonuclease, C-terminal subdomain"/>
    <property type="match status" value="1"/>
</dbReference>
<dbReference type="Gene3D" id="1.10.8.10">
    <property type="entry name" value="DNA helicase RuvA subunit, C-terminal domain"/>
    <property type="match status" value="1"/>
</dbReference>
<dbReference type="Gene3D" id="2.40.50.140">
    <property type="entry name" value="Nucleic acid-binding proteins"/>
    <property type="match status" value="1"/>
</dbReference>
<dbReference type="HAMAP" id="MF_00031">
    <property type="entry name" value="DNA_HJ_migration_RuvA"/>
    <property type="match status" value="1"/>
</dbReference>
<dbReference type="InterPro" id="IPR013849">
    <property type="entry name" value="DNA_helicase_Holl-junc_RuvA_I"/>
</dbReference>
<dbReference type="InterPro" id="IPR003583">
    <property type="entry name" value="Hlx-hairpin-Hlx_DNA-bd_motif"/>
</dbReference>
<dbReference type="InterPro" id="IPR012340">
    <property type="entry name" value="NA-bd_OB-fold"/>
</dbReference>
<dbReference type="InterPro" id="IPR000085">
    <property type="entry name" value="RuvA"/>
</dbReference>
<dbReference type="InterPro" id="IPR010994">
    <property type="entry name" value="RuvA_2-like"/>
</dbReference>
<dbReference type="InterPro" id="IPR011114">
    <property type="entry name" value="RuvA_C"/>
</dbReference>
<dbReference type="InterPro" id="IPR036267">
    <property type="entry name" value="RuvA_C_sf"/>
</dbReference>
<dbReference type="NCBIfam" id="TIGR00084">
    <property type="entry name" value="ruvA"/>
    <property type="match status" value="1"/>
</dbReference>
<dbReference type="Pfam" id="PF14520">
    <property type="entry name" value="HHH_5"/>
    <property type="match status" value="1"/>
</dbReference>
<dbReference type="Pfam" id="PF07499">
    <property type="entry name" value="RuvA_C"/>
    <property type="match status" value="1"/>
</dbReference>
<dbReference type="Pfam" id="PF01330">
    <property type="entry name" value="RuvA_N"/>
    <property type="match status" value="1"/>
</dbReference>
<dbReference type="SMART" id="SM00278">
    <property type="entry name" value="HhH1"/>
    <property type="match status" value="2"/>
</dbReference>
<dbReference type="SUPFAM" id="SSF46929">
    <property type="entry name" value="DNA helicase RuvA subunit, C-terminal domain"/>
    <property type="match status" value="1"/>
</dbReference>
<dbReference type="SUPFAM" id="SSF50249">
    <property type="entry name" value="Nucleic acid-binding proteins"/>
    <property type="match status" value="1"/>
</dbReference>
<dbReference type="SUPFAM" id="SSF47781">
    <property type="entry name" value="RuvA domain 2-like"/>
    <property type="match status" value="1"/>
</dbReference>
<name>RUVA_NITMU</name>
<feature type="chain" id="PRO_1000002499" description="Holliday junction branch migration complex subunit RuvA">
    <location>
        <begin position="1"/>
        <end position="197"/>
    </location>
</feature>
<feature type="region of interest" description="Domain I" evidence="1">
    <location>
        <begin position="1"/>
        <end position="64"/>
    </location>
</feature>
<feature type="region of interest" description="Domain II" evidence="1">
    <location>
        <begin position="65"/>
        <end position="142"/>
    </location>
</feature>
<feature type="region of interest" description="Flexible linker" evidence="1">
    <location>
        <begin position="143"/>
        <end position="153"/>
    </location>
</feature>
<feature type="region of interest" description="Domain III" evidence="1">
    <location>
        <begin position="153"/>
        <end position="197"/>
    </location>
</feature>
<comment type="function">
    <text evidence="1">The RuvA-RuvB-RuvC complex processes Holliday junction (HJ) DNA during genetic recombination and DNA repair, while the RuvA-RuvB complex plays an important role in the rescue of blocked DNA replication forks via replication fork reversal (RFR). RuvA specifically binds to HJ cruciform DNA, conferring on it an open structure. The RuvB hexamer acts as an ATP-dependent pump, pulling dsDNA into and through the RuvAB complex. HJ branch migration allows RuvC to scan DNA until it finds its consensus sequence, where it cleaves and resolves the cruciform DNA.</text>
</comment>
<comment type="subunit">
    <text evidence="1">Homotetramer. Forms an RuvA(8)-RuvB(12)-Holliday junction (HJ) complex. HJ DNA is sandwiched between 2 RuvA tetramers; dsDNA enters through RuvA and exits via RuvB. An RuvB hexamer assembles on each DNA strand where it exits the tetramer. Each RuvB hexamer is contacted by two RuvA subunits (via domain III) on 2 adjacent RuvB subunits; this complex drives branch migration. In the full resolvosome a probable DNA-RuvA(4)-RuvB(12)-RuvC(2) complex forms which resolves the HJ.</text>
</comment>
<comment type="subcellular location">
    <subcellularLocation>
        <location evidence="1">Cytoplasm</location>
    </subcellularLocation>
</comment>
<comment type="domain">
    <text evidence="1">Has three domains with a flexible linker between the domains II and III and assumes an 'L' shape. Domain III is highly mobile and contacts RuvB.</text>
</comment>
<comment type="similarity">
    <text evidence="1">Belongs to the RuvA family.</text>
</comment>
<organism>
    <name type="scientific">Nitrosospira multiformis (strain ATCC 25196 / NCIMB 11849 / C 71)</name>
    <dbReference type="NCBI Taxonomy" id="323848"/>
    <lineage>
        <taxon>Bacteria</taxon>
        <taxon>Pseudomonadati</taxon>
        <taxon>Pseudomonadota</taxon>
        <taxon>Betaproteobacteria</taxon>
        <taxon>Nitrosomonadales</taxon>
        <taxon>Nitrosomonadaceae</taxon>
        <taxon>Nitrosospira</taxon>
    </lineage>
</organism>